<feature type="chain" id="PRO_5002867622" description="Steroid (22S)-hydroxylase">
    <location>
        <begin position="1"/>
        <end position="506"/>
    </location>
</feature>
<feature type="transmembrane region" description="Helical" evidence="3">
    <location>
        <begin position="12"/>
        <end position="32"/>
    </location>
</feature>
<feature type="binding site" description="axial binding residue" evidence="1">
    <location>
        <position position="449"/>
    </location>
    <ligand>
        <name>heme</name>
        <dbReference type="ChEBI" id="CHEBI:30413"/>
    </ligand>
    <ligandPart>
        <name>Fe</name>
        <dbReference type="ChEBI" id="CHEBI:18248"/>
    </ligandPart>
</feature>
<protein>
    <recommendedName>
        <fullName evidence="2">Steroid (22S)-hydroxylase</fullName>
        <ecNumber evidence="2">1.14.14.178</ecNumber>
    </recommendedName>
    <alternativeName>
        <fullName evidence="2">(22S)-22-hydroxycampesterol synthase</fullName>
    </alternativeName>
    <alternativeName>
        <fullName evidence="2">6-deoxocathasterone synthase</fullName>
    </alternativeName>
    <alternativeName>
        <fullName evidence="2">Cytochrome P450 90B2</fullName>
        <shortName evidence="2">OsCYP90B2</shortName>
    </alternativeName>
</protein>
<accession>B8AJL3</accession>
<reference key="1">
    <citation type="journal article" date="2005" name="PLoS Biol.">
        <title>The genomes of Oryza sativa: a history of duplications.</title>
        <authorList>
            <person name="Yu J."/>
            <person name="Wang J."/>
            <person name="Lin W."/>
            <person name="Li S."/>
            <person name="Li H."/>
            <person name="Zhou J."/>
            <person name="Ni P."/>
            <person name="Dong W."/>
            <person name="Hu S."/>
            <person name="Zeng C."/>
            <person name="Zhang J."/>
            <person name="Zhang Y."/>
            <person name="Li R."/>
            <person name="Xu Z."/>
            <person name="Li S."/>
            <person name="Li X."/>
            <person name="Zheng H."/>
            <person name="Cong L."/>
            <person name="Lin L."/>
            <person name="Yin J."/>
            <person name="Geng J."/>
            <person name="Li G."/>
            <person name="Shi J."/>
            <person name="Liu J."/>
            <person name="Lv H."/>
            <person name="Li J."/>
            <person name="Wang J."/>
            <person name="Deng Y."/>
            <person name="Ran L."/>
            <person name="Shi X."/>
            <person name="Wang X."/>
            <person name="Wu Q."/>
            <person name="Li C."/>
            <person name="Ren X."/>
            <person name="Wang J."/>
            <person name="Wang X."/>
            <person name="Li D."/>
            <person name="Liu D."/>
            <person name="Zhang X."/>
            <person name="Ji Z."/>
            <person name="Zhao W."/>
            <person name="Sun Y."/>
            <person name="Zhang Z."/>
            <person name="Bao J."/>
            <person name="Han Y."/>
            <person name="Dong L."/>
            <person name="Ji J."/>
            <person name="Chen P."/>
            <person name="Wu S."/>
            <person name="Liu J."/>
            <person name="Xiao Y."/>
            <person name="Bu D."/>
            <person name="Tan J."/>
            <person name="Yang L."/>
            <person name="Ye C."/>
            <person name="Zhang J."/>
            <person name="Xu J."/>
            <person name="Zhou Y."/>
            <person name="Yu Y."/>
            <person name="Zhang B."/>
            <person name="Zhuang S."/>
            <person name="Wei H."/>
            <person name="Liu B."/>
            <person name="Lei M."/>
            <person name="Yu H."/>
            <person name="Li Y."/>
            <person name="Xu H."/>
            <person name="Wei S."/>
            <person name="He X."/>
            <person name="Fang L."/>
            <person name="Zhang Z."/>
            <person name="Zhang Y."/>
            <person name="Huang X."/>
            <person name="Su Z."/>
            <person name="Tong W."/>
            <person name="Li J."/>
            <person name="Tong Z."/>
            <person name="Li S."/>
            <person name="Ye J."/>
            <person name="Wang L."/>
            <person name="Fang L."/>
            <person name="Lei T."/>
            <person name="Chen C.-S."/>
            <person name="Chen H.-C."/>
            <person name="Xu Z."/>
            <person name="Li H."/>
            <person name="Huang H."/>
            <person name="Zhang F."/>
            <person name="Xu H."/>
            <person name="Li N."/>
            <person name="Zhao C."/>
            <person name="Li S."/>
            <person name="Dong L."/>
            <person name="Huang Y."/>
            <person name="Li L."/>
            <person name="Xi Y."/>
            <person name="Qi Q."/>
            <person name="Li W."/>
            <person name="Zhang B."/>
            <person name="Hu W."/>
            <person name="Zhang Y."/>
            <person name="Tian X."/>
            <person name="Jiao Y."/>
            <person name="Liang X."/>
            <person name="Jin J."/>
            <person name="Gao L."/>
            <person name="Zheng W."/>
            <person name="Hao B."/>
            <person name="Liu S.-M."/>
            <person name="Wang W."/>
            <person name="Yuan L."/>
            <person name="Cao M."/>
            <person name="McDermott J."/>
            <person name="Samudrala R."/>
            <person name="Wang J."/>
            <person name="Wong G.K.-S."/>
            <person name="Yang H."/>
        </authorList>
    </citation>
    <scope>NUCLEOTIDE SEQUENCE [LARGE SCALE GENOMIC DNA]</scope>
    <source>
        <strain>cv. 93-11</strain>
    </source>
</reference>
<evidence type="ECO:0000250" key="1">
    <source>
        <dbReference type="UniProtKB" id="P04798"/>
    </source>
</evidence>
<evidence type="ECO:0000250" key="2">
    <source>
        <dbReference type="UniProtKB" id="Q5CCK3"/>
    </source>
</evidence>
<evidence type="ECO:0000255" key="3"/>
<evidence type="ECO:0000305" key="4"/>
<evidence type="ECO:0000312" key="5">
    <source>
        <dbReference type="EMBL" id="EEC74804.1"/>
    </source>
</evidence>
<proteinExistence type="inferred from homology"/>
<dbReference type="EC" id="1.14.14.178" evidence="2"/>
<dbReference type="EMBL" id="CM000128">
    <property type="protein sequence ID" value="EEC74804.1"/>
    <property type="molecule type" value="Genomic_DNA"/>
</dbReference>
<dbReference type="SMR" id="B8AJL3"/>
<dbReference type="STRING" id="39946.B8AJL3"/>
<dbReference type="EnsemblPlants" id="BGIOSGA012169-TA">
    <property type="protein sequence ID" value="BGIOSGA012169-PA"/>
    <property type="gene ID" value="BGIOSGA012169"/>
</dbReference>
<dbReference type="EnsemblPlants" id="OsMH63_03G009220_01">
    <property type="protein sequence ID" value="OsMH63_03G009220_01"/>
    <property type="gene ID" value="OsMH63_03G009220"/>
</dbReference>
<dbReference type="EnsemblPlants" id="OsPr106_03g0009260.01">
    <property type="protein sequence ID" value="OsPr106_03g0009260.01"/>
    <property type="gene ID" value="OsPr106_03g0009260"/>
</dbReference>
<dbReference type="EnsemblPlants" id="OsZS97_03G009110_01">
    <property type="protein sequence ID" value="OsZS97_03G009110_01"/>
    <property type="gene ID" value="OsZS97_03G009110"/>
</dbReference>
<dbReference type="Gramene" id="BGIOSGA012169-TA">
    <property type="protein sequence ID" value="BGIOSGA012169-PA"/>
    <property type="gene ID" value="BGIOSGA012169"/>
</dbReference>
<dbReference type="Gramene" id="OsMH63_03G009220_01">
    <property type="protein sequence ID" value="OsMH63_03G009220_01"/>
    <property type="gene ID" value="OsMH63_03G009220"/>
</dbReference>
<dbReference type="Gramene" id="OsPr106_03g0009260.01">
    <property type="protein sequence ID" value="OsPr106_03g0009260.01"/>
    <property type="gene ID" value="OsPr106_03g0009260"/>
</dbReference>
<dbReference type="Gramene" id="OsZS97_03G009110_01">
    <property type="protein sequence ID" value="OsZS97_03G009110_01"/>
    <property type="gene ID" value="OsZS97_03G009110"/>
</dbReference>
<dbReference type="HOGENOM" id="CLU_001570_15_5_1"/>
<dbReference type="OMA" id="KLWNLYC"/>
<dbReference type="UniPathway" id="UPA00381"/>
<dbReference type="Proteomes" id="UP000007015">
    <property type="component" value="Chromosome 3"/>
</dbReference>
<dbReference type="GO" id="GO:0005783">
    <property type="term" value="C:endoplasmic reticulum"/>
    <property type="evidence" value="ECO:0007669"/>
    <property type="project" value="EnsemblPlants"/>
</dbReference>
<dbReference type="GO" id="GO:0016020">
    <property type="term" value="C:membrane"/>
    <property type="evidence" value="ECO:0007669"/>
    <property type="project" value="UniProtKB-SubCell"/>
</dbReference>
<dbReference type="GO" id="GO:0080132">
    <property type="term" value="F:fatty acid 2-hydroxylase activity"/>
    <property type="evidence" value="ECO:0007669"/>
    <property type="project" value="EnsemblPlants"/>
</dbReference>
<dbReference type="GO" id="GO:0020037">
    <property type="term" value="F:heme binding"/>
    <property type="evidence" value="ECO:0007669"/>
    <property type="project" value="InterPro"/>
</dbReference>
<dbReference type="GO" id="GO:0005506">
    <property type="term" value="F:iron ion binding"/>
    <property type="evidence" value="ECO:0007669"/>
    <property type="project" value="InterPro"/>
</dbReference>
<dbReference type="GO" id="GO:0016132">
    <property type="term" value="P:brassinosteroid biosynthetic process"/>
    <property type="evidence" value="ECO:0007669"/>
    <property type="project" value="UniProtKB-UniPathway"/>
</dbReference>
<dbReference type="GO" id="GO:0010268">
    <property type="term" value="P:brassinosteroid homeostasis"/>
    <property type="evidence" value="ECO:0007669"/>
    <property type="project" value="TreeGrafter"/>
</dbReference>
<dbReference type="GO" id="GO:0009867">
    <property type="term" value="P:jasmonic acid mediated signaling pathway"/>
    <property type="evidence" value="ECO:0007669"/>
    <property type="project" value="EnsemblPlants"/>
</dbReference>
<dbReference type="GO" id="GO:0010358">
    <property type="term" value="P:leaf shaping"/>
    <property type="evidence" value="ECO:0007669"/>
    <property type="project" value="EnsemblPlants"/>
</dbReference>
<dbReference type="GO" id="GO:0009741">
    <property type="term" value="P:response to brassinosteroid"/>
    <property type="evidence" value="ECO:0007669"/>
    <property type="project" value="EnsemblPlants"/>
</dbReference>
<dbReference type="GO" id="GO:0016125">
    <property type="term" value="P:sterol metabolic process"/>
    <property type="evidence" value="ECO:0007669"/>
    <property type="project" value="TreeGrafter"/>
</dbReference>
<dbReference type="GO" id="GO:0009826">
    <property type="term" value="P:unidimensional cell growth"/>
    <property type="evidence" value="ECO:0007669"/>
    <property type="project" value="EnsemblPlants"/>
</dbReference>
<dbReference type="CDD" id="cd11043">
    <property type="entry name" value="CYP90-like"/>
    <property type="match status" value="1"/>
</dbReference>
<dbReference type="FunFam" id="1.10.630.10:FF:000061">
    <property type="entry name" value="Cytochrome P450 90B1"/>
    <property type="match status" value="1"/>
</dbReference>
<dbReference type="Gene3D" id="1.10.630.10">
    <property type="entry name" value="Cytochrome P450"/>
    <property type="match status" value="1"/>
</dbReference>
<dbReference type="InterPro" id="IPR001128">
    <property type="entry name" value="Cyt_P450"/>
</dbReference>
<dbReference type="InterPro" id="IPR002401">
    <property type="entry name" value="Cyt_P450_E_grp-I"/>
</dbReference>
<dbReference type="InterPro" id="IPR036396">
    <property type="entry name" value="Cyt_P450_sf"/>
</dbReference>
<dbReference type="PANTHER" id="PTHR24286">
    <property type="entry name" value="CYTOCHROME P450 26"/>
    <property type="match status" value="1"/>
</dbReference>
<dbReference type="PANTHER" id="PTHR24286:SF194">
    <property type="entry name" value="STEROID (22S)-HYDROXYLASE"/>
    <property type="match status" value="1"/>
</dbReference>
<dbReference type="Pfam" id="PF00067">
    <property type="entry name" value="p450"/>
    <property type="match status" value="1"/>
</dbReference>
<dbReference type="PRINTS" id="PR00463">
    <property type="entry name" value="EP450I"/>
</dbReference>
<dbReference type="PRINTS" id="PR00385">
    <property type="entry name" value="P450"/>
</dbReference>
<dbReference type="SUPFAM" id="SSF48264">
    <property type="entry name" value="Cytochrome P450"/>
    <property type="match status" value="1"/>
</dbReference>
<gene>
    <name evidence="2" type="primary">CYP90B2</name>
    <name evidence="5" type="ORF">OsI_10612</name>
</gene>
<organism>
    <name type="scientific">Oryza sativa subsp. indica</name>
    <name type="common">Rice</name>
    <dbReference type="NCBI Taxonomy" id="39946"/>
    <lineage>
        <taxon>Eukaryota</taxon>
        <taxon>Viridiplantae</taxon>
        <taxon>Streptophyta</taxon>
        <taxon>Embryophyta</taxon>
        <taxon>Tracheophyta</taxon>
        <taxon>Spermatophyta</taxon>
        <taxon>Magnoliopsida</taxon>
        <taxon>Liliopsida</taxon>
        <taxon>Poales</taxon>
        <taxon>Poaceae</taxon>
        <taxon>BOP clade</taxon>
        <taxon>Oryzoideae</taxon>
        <taxon>Oryzeae</taxon>
        <taxon>Oryzinae</taxon>
        <taxon>Oryza</taxon>
        <taxon>Oryza sativa</taxon>
    </lineage>
</organism>
<keyword id="KW-0408">Iron</keyword>
<keyword id="KW-0472">Membrane</keyword>
<keyword id="KW-0479">Metal-binding</keyword>
<keyword id="KW-0560">Oxidoreductase</keyword>
<keyword id="KW-1185">Reference proteome</keyword>
<keyword id="KW-0812">Transmembrane</keyword>
<keyword id="KW-1133">Transmembrane helix</keyword>
<name>C90B2_ORYSI</name>
<sequence>MAAMMASITSELLFFLPFILLALLTFYTTTVAKCHGGHWWRGGTTPAKRKRMNLPPGAAGWPLVGETFGYLRAHPATSVGRFMEQHIARYGKIYRSSLFGERTVVSADAGLNRYILQNEGRLFECSYPRSIGGILGKWSMLVLVGDPHREMRAISLNFLSSVRLRAVLLPEVERHTLLVLRAWLPSSTFSAQHQAKKFTFNLMAKNIMSMDPGEEETERLRREYITFMKGVVSAPLNLPGTPYWKALKSRAAILGVIERKMEERVEKLSKEDASVEQDDLLGWALKQSNLSKEQILDLLLSLLFAGHETSSMALALAIFFLEGCPKAVQELREEHLGIARRQRLRGECKLSWEDYKEMVFTQCVINETLRLGNVVRFLHRKVIKDVHYKGYDIPSGWKILPVLAAVHLDSSLYEDPQRFNPWRWKSSGSSGGLAQSSSFMPYGGGTRLCAGSELAKLEMAVFLHHLVLNFRWELAEPDQAFVFPFVDFPKGLPIRVHRIAQDDEQE</sequence>
<comment type="function">
    <text evidence="2">Catalyzes the C22-alpha-hydroxylation step in brassinosteroid biosynthesis, which is the rate-limiting step in this biosynthetic pathway (By similarity). Catalyzes the conversion of campesterol (CR) to (22S)-22-hydroxycampesterol (22-OHCR, 22-hydroxyCR) and of campestanol (CN) to 6-deoxocathasterone (6-deoxoCT) (By similarity).</text>
</comment>
<comment type="catalytic activity">
    <reaction evidence="2">
        <text>a C28-steroid + reduced [NADPH--hemoprotein reductase] + O2 = a (22S)-22-hydroxy C28-steroid + oxidized [NADPH--hemoprotein reductase] + H2O + H(+)</text>
        <dbReference type="Rhea" id="RHEA:70063"/>
        <dbReference type="Rhea" id="RHEA-COMP:11964"/>
        <dbReference type="Rhea" id="RHEA-COMP:11965"/>
        <dbReference type="ChEBI" id="CHEBI:15377"/>
        <dbReference type="ChEBI" id="CHEBI:15378"/>
        <dbReference type="ChEBI" id="CHEBI:15379"/>
        <dbReference type="ChEBI" id="CHEBI:57618"/>
        <dbReference type="ChEBI" id="CHEBI:58210"/>
        <dbReference type="ChEBI" id="CHEBI:188921"/>
        <dbReference type="ChEBI" id="CHEBI:188922"/>
        <dbReference type="EC" id="1.14.14.178"/>
    </reaction>
    <physiologicalReaction direction="left-to-right" evidence="2">
        <dbReference type="Rhea" id="RHEA:70064"/>
    </physiologicalReaction>
</comment>
<comment type="catalytic activity">
    <reaction evidence="2">
        <text>campesterol + reduced [NADPH--hemoprotein reductase] + O2 = (22S)-22-hydroxycampesterol + oxidized [NADPH--hemoprotein reductase] + H2O + H(+)</text>
        <dbReference type="Rhea" id="RHEA:69835"/>
        <dbReference type="Rhea" id="RHEA-COMP:11964"/>
        <dbReference type="Rhea" id="RHEA-COMP:11965"/>
        <dbReference type="ChEBI" id="CHEBI:15377"/>
        <dbReference type="ChEBI" id="CHEBI:15378"/>
        <dbReference type="ChEBI" id="CHEBI:15379"/>
        <dbReference type="ChEBI" id="CHEBI:28623"/>
        <dbReference type="ChEBI" id="CHEBI:57618"/>
        <dbReference type="ChEBI" id="CHEBI:58210"/>
        <dbReference type="ChEBI" id="CHEBI:72331"/>
    </reaction>
    <physiologicalReaction direction="left-to-right" evidence="2">
        <dbReference type="Rhea" id="RHEA:69836"/>
    </physiologicalReaction>
</comment>
<comment type="catalytic activity">
    <reaction evidence="2">
        <text>campestanol + reduced [NADPH--hemoprotein reductase] + O2 = 6-deoxycathasterone + oxidized [NADPH--hemoprotein reductase] + H2O + H(+)</text>
        <dbReference type="Rhea" id="RHEA:69831"/>
        <dbReference type="Rhea" id="RHEA-COMP:11964"/>
        <dbReference type="Rhea" id="RHEA-COMP:11965"/>
        <dbReference type="ChEBI" id="CHEBI:15377"/>
        <dbReference type="ChEBI" id="CHEBI:15378"/>
        <dbReference type="ChEBI" id="CHEBI:15379"/>
        <dbReference type="ChEBI" id="CHEBI:20714"/>
        <dbReference type="ChEBI" id="CHEBI:36799"/>
        <dbReference type="ChEBI" id="CHEBI:57618"/>
        <dbReference type="ChEBI" id="CHEBI:58210"/>
    </reaction>
    <physiologicalReaction direction="left-to-right" evidence="2">
        <dbReference type="Rhea" id="RHEA:69832"/>
    </physiologicalReaction>
</comment>
<comment type="cofactor">
    <cofactor evidence="1">
        <name>heme</name>
        <dbReference type="ChEBI" id="CHEBI:30413"/>
    </cofactor>
</comment>
<comment type="pathway">
    <text evidence="2">Plant hormone biosynthesis; brassinosteroid biosynthesis.</text>
</comment>
<comment type="subcellular location">
    <subcellularLocation>
        <location evidence="3">Membrane</location>
        <topology evidence="3">Single-pass membrane protein</topology>
    </subcellularLocation>
</comment>
<comment type="similarity">
    <text evidence="4">Belongs to the cytochrome P450 family.</text>
</comment>